<comment type="function">
    <text evidence="1">Involved in mRNA degradation. Catalyzes the phosphorolysis of single-stranded polyribonucleotides processively in the 3'- to 5'-direction.</text>
</comment>
<comment type="catalytic activity">
    <reaction evidence="1">
        <text>RNA(n+1) + phosphate = RNA(n) + a ribonucleoside 5'-diphosphate</text>
        <dbReference type="Rhea" id="RHEA:22096"/>
        <dbReference type="Rhea" id="RHEA-COMP:14527"/>
        <dbReference type="Rhea" id="RHEA-COMP:17342"/>
        <dbReference type="ChEBI" id="CHEBI:43474"/>
        <dbReference type="ChEBI" id="CHEBI:57930"/>
        <dbReference type="ChEBI" id="CHEBI:140395"/>
        <dbReference type="EC" id="2.7.7.8"/>
    </reaction>
</comment>
<comment type="cofactor">
    <cofactor evidence="1">
        <name>Mg(2+)</name>
        <dbReference type="ChEBI" id="CHEBI:18420"/>
    </cofactor>
</comment>
<comment type="subcellular location">
    <subcellularLocation>
        <location evidence="1">Cytoplasm</location>
    </subcellularLocation>
</comment>
<comment type="similarity">
    <text evidence="1">Belongs to the polyribonucleotide nucleotidyltransferase family.</text>
</comment>
<feature type="chain" id="PRO_0000329894" description="Polyribonucleotide nucleotidyltransferase">
    <location>
        <begin position="1"/>
        <end position="715"/>
    </location>
</feature>
<feature type="domain" description="KH" evidence="1">
    <location>
        <begin position="562"/>
        <end position="621"/>
    </location>
</feature>
<feature type="domain" description="S1 motif" evidence="1">
    <location>
        <begin position="631"/>
        <end position="699"/>
    </location>
</feature>
<feature type="binding site" evidence="1">
    <location>
        <position position="495"/>
    </location>
    <ligand>
        <name>Mg(2+)</name>
        <dbReference type="ChEBI" id="CHEBI:18420"/>
    </ligand>
</feature>
<feature type="binding site" evidence="1">
    <location>
        <position position="501"/>
    </location>
    <ligand>
        <name>Mg(2+)</name>
        <dbReference type="ChEBI" id="CHEBI:18420"/>
    </ligand>
</feature>
<reference key="1">
    <citation type="journal article" date="2002" name="DNA Res.">
        <title>Complete genome structure of the thermophilic cyanobacterium Thermosynechococcus elongatus BP-1.</title>
        <authorList>
            <person name="Nakamura Y."/>
            <person name="Kaneko T."/>
            <person name="Sato S."/>
            <person name="Ikeuchi M."/>
            <person name="Katoh H."/>
            <person name="Sasamoto S."/>
            <person name="Watanabe A."/>
            <person name="Iriguchi M."/>
            <person name="Kawashima K."/>
            <person name="Kimura T."/>
            <person name="Kishida Y."/>
            <person name="Kiyokawa C."/>
            <person name="Kohara M."/>
            <person name="Matsumoto M."/>
            <person name="Matsuno A."/>
            <person name="Nakazaki N."/>
            <person name="Shimpo S."/>
            <person name="Sugimoto M."/>
            <person name="Takeuchi C."/>
            <person name="Yamada M."/>
            <person name="Tabata S."/>
        </authorList>
    </citation>
    <scope>NUCLEOTIDE SEQUENCE [LARGE SCALE GENOMIC DNA]</scope>
    <source>
        <strain>NIES-2133 / IAM M-273 / BP-1</strain>
    </source>
</reference>
<sequence length="715" mass="77424">MKGLEKIIPLDGRDIKVVLQKFAPQAAGSILISSGETAVLVTANRAAAREGIDFLPLVVDYEERLYAAGRIPGGFLRREGRPPEKAILIGRLIDRPLRPLFPQWLRDDLQVVATTVSLDENAPPDVLAVTGASIAVLLAQIPFNGPMAAVRVGLVGDEFVINPTYKEIERGGLDLVVAGSPDGVVMVEAGANELPEADMIEAIDFAYEVIRDLIQAQRDLLKELGIDIVRAEPPAIDPTLENFIYDRAAEPVKAILKRFEKDKNVRDAALDEVQGAIAQEIAALPEDDPVAVAAAENPKALPTLFKAVTKKLMRQQIIEEGVRVDGRRLDEVRPIWCEVGVLPERVHGSALFNRGLTQVMSVTTLGSPADAQALDDLHPEDSKRYLHHYNFPPYSVGEVKPLRSPGRREIGHGALAERALEPVLPPKEEFPYVIRVVSEVLSSDGSTSMGSVCGSTLSLMDAGVPIRKPVSGAAMGLIKEGNEVRILTDIQGIEDFLGDMDFKVAGTDSGITALQMDMKITGLPVAVIQQAIEQARPARLHILEKMLAVLDKPRPQLPPSAPRLLTLQIPPDMIGLVIGPGGKTVRGISEQYNVKVDISEEGLVTITAPNETNAKQARAAIEGLTRKLNAGDVYLGRVTRIIPIGAFVELLPGKEGMIHISQLAEYRVGKVEDEVKIGDEIVVKIREVDSKGRINLTRLGIHPDEAEAARSNSVV</sequence>
<keyword id="KW-0963">Cytoplasm</keyword>
<keyword id="KW-0460">Magnesium</keyword>
<keyword id="KW-0479">Metal-binding</keyword>
<keyword id="KW-0548">Nucleotidyltransferase</keyword>
<keyword id="KW-1185">Reference proteome</keyword>
<keyword id="KW-0694">RNA-binding</keyword>
<keyword id="KW-0808">Transferase</keyword>
<organism>
    <name type="scientific">Thermosynechococcus vestitus (strain NIES-2133 / IAM M-273 / BP-1)</name>
    <dbReference type="NCBI Taxonomy" id="197221"/>
    <lineage>
        <taxon>Bacteria</taxon>
        <taxon>Bacillati</taxon>
        <taxon>Cyanobacteriota</taxon>
        <taxon>Cyanophyceae</taxon>
        <taxon>Acaryochloridales</taxon>
        <taxon>Thermosynechococcaceae</taxon>
        <taxon>Thermosynechococcus</taxon>
    </lineage>
</organism>
<accession>Q8DGW9</accession>
<gene>
    <name evidence="1" type="primary">pnp</name>
    <name type="ordered locus">tll2193</name>
</gene>
<dbReference type="EC" id="2.7.7.8" evidence="1"/>
<dbReference type="EMBL" id="BA000039">
    <property type="protein sequence ID" value="BAC09745.1"/>
    <property type="molecule type" value="Genomic_DNA"/>
</dbReference>
<dbReference type="RefSeq" id="NP_682983.1">
    <property type="nucleotide sequence ID" value="NC_004113.1"/>
</dbReference>
<dbReference type="RefSeq" id="WP_011058027.1">
    <property type="nucleotide sequence ID" value="NC_004113.1"/>
</dbReference>
<dbReference type="SMR" id="Q8DGW9"/>
<dbReference type="STRING" id="197221.gene:10748804"/>
<dbReference type="EnsemblBacteria" id="BAC09745">
    <property type="protein sequence ID" value="BAC09745"/>
    <property type="gene ID" value="BAC09745"/>
</dbReference>
<dbReference type="KEGG" id="tel:tll2193"/>
<dbReference type="PATRIC" id="fig|197221.4.peg.2300"/>
<dbReference type="eggNOG" id="COG1185">
    <property type="taxonomic scope" value="Bacteria"/>
</dbReference>
<dbReference type="Proteomes" id="UP000000440">
    <property type="component" value="Chromosome"/>
</dbReference>
<dbReference type="GO" id="GO:0005829">
    <property type="term" value="C:cytosol"/>
    <property type="evidence" value="ECO:0007669"/>
    <property type="project" value="TreeGrafter"/>
</dbReference>
<dbReference type="GO" id="GO:0000175">
    <property type="term" value="F:3'-5'-RNA exonuclease activity"/>
    <property type="evidence" value="ECO:0007669"/>
    <property type="project" value="TreeGrafter"/>
</dbReference>
<dbReference type="GO" id="GO:0000287">
    <property type="term" value="F:magnesium ion binding"/>
    <property type="evidence" value="ECO:0007669"/>
    <property type="project" value="UniProtKB-UniRule"/>
</dbReference>
<dbReference type="GO" id="GO:0004654">
    <property type="term" value="F:polyribonucleotide nucleotidyltransferase activity"/>
    <property type="evidence" value="ECO:0007669"/>
    <property type="project" value="UniProtKB-UniRule"/>
</dbReference>
<dbReference type="GO" id="GO:0003723">
    <property type="term" value="F:RNA binding"/>
    <property type="evidence" value="ECO:0007669"/>
    <property type="project" value="UniProtKB-UniRule"/>
</dbReference>
<dbReference type="GO" id="GO:0006402">
    <property type="term" value="P:mRNA catabolic process"/>
    <property type="evidence" value="ECO:0007669"/>
    <property type="project" value="UniProtKB-UniRule"/>
</dbReference>
<dbReference type="GO" id="GO:0006396">
    <property type="term" value="P:RNA processing"/>
    <property type="evidence" value="ECO:0007669"/>
    <property type="project" value="InterPro"/>
</dbReference>
<dbReference type="CDD" id="cd02393">
    <property type="entry name" value="KH-I_PNPase"/>
    <property type="match status" value="1"/>
</dbReference>
<dbReference type="CDD" id="cd11363">
    <property type="entry name" value="RNase_PH_PNPase_1"/>
    <property type="match status" value="1"/>
</dbReference>
<dbReference type="CDD" id="cd11364">
    <property type="entry name" value="RNase_PH_PNPase_2"/>
    <property type="match status" value="1"/>
</dbReference>
<dbReference type="CDD" id="cd04472">
    <property type="entry name" value="S1_PNPase"/>
    <property type="match status" value="1"/>
</dbReference>
<dbReference type="FunFam" id="3.30.1370.10:FF:000001">
    <property type="entry name" value="Polyribonucleotide nucleotidyltransferase"/>
    <property type="match status" value="1"/>
</dbReference>
<dbReference type="FunFam" id="3.30.230.70:FF:000001">
    <property type="entry name" value="Polyribonucleotide nucleotidyltransferase"/>
    <property type="match status" value="1"/>
</dbReference>
<dbReference type="FunFam" id="3.30.230.70:FF:000002">
    <property type="entry name" value="Polyribonucleotide nucleotidyltransferase"/>
    <property type="match status" value="1"/>
</dbReference>
<dbReference type="Gene3D" id="3.30.230.70">
    <property type="entry name" value="GHMP Kinase, N-terminal domain"/>
    <property type="match status" value="2"/>
</dbReference>
<dbReference type="Gene3D" id="3.30.1370.10">
    <property type="entry name" value="K Homology domain, type 1"/>
    <property type="match status" value="1"/>
</dbReference>
<dbReference type="Gene3D" id="2.40.50.140">
    <property type="entry name" value="Nucleic acid-binding proteins"/>
    <property type="match status" value="1"/>
</dbReference>
<dbReference type="HAMAP" id="MF_01595">
    <property type="entry name" value="PNPase"/>
    <property type="match status" value="1"/>
</dbReference>
<dbReference type="InterPro" id="IPR001247">
    <property type="entry name" value="ExoRNase_PH_dom1"/>
</dbReference>
<dbReference type="InterPro" id="IPR015847">
    <property type="entry name" value="ExoRNase_PH_dom2"/>
</dbReference>
<dbReference type="InterPro" id="IPR036345">
    <property type="entry name" value="ExoRNase_PH_dom2_sf"/>
</dbReference>
<dbReference type="InterPro" id="IPR004087">
    <property type="entry name" value="KH_dom"/>
</dbReference>
<dbReference type="InterPro" id="IPR004088">
    <property type="entry name" value="KH_dom_type_1"/>
</dbReference>
<dbReference type="InterPro" id="IPR036612">
    <property type="entry name" value="KH_dom_type_1_sf"/>
</dbReference>
<dbReference type="InterPro" id="IPR012340">
    <property type="entry name" value="NA-bd_OB-fold"/>
</dbReference>
<dbReference type="InterPro" id="IPR012162">
    <property type="entry name" value="PNPase"/>
</dbReference>
<dbReference type="InterPro" id="IPR027408">
    <property type="entry name" value="PNPase/RNase_PH_dom_sf"/>
</dbReference>
<dbReference type="InterPro" id="IPR015848">
    <property type="entry name" value="PNPase_PH_RNA-bd_bac/org-type"/>
</dbReference>
<dbReference type="InterPro" id="IPR036456">
    <property type="entry name" value="PNPase_PH_RNA-bd_sf"/>
</dbReference>
<dbReference type="InterPro" id="IPR020568">
    <property type="entry name" value="Ribosomal_Su5_D2-typ_SF"/>
</dbReference>
<dbReference type="InterPro" id="IPR003029">
    <property type="entry name" value="S1_domain"/>
</dbReference>
<dbReference type="NCBIfam" id="TIGR03591">
    <property type="entry name" value="polynuc_phos"/>
    <property type="match status" value="1"/>
</dbReference>
<dbReference type="NCBIfam" id="NF008805">
    <property type="entry name" value="PRK11824.1"/>
    <property type="match status" value="1"/>
</dbReference>
<dbReference type="PANTHER" id="PTHR11252">
    <property type="entry name" value="POLYRIBONUCLEOTIDE NUCLEOTIDYLTRANSFERASE"/>
    <property type="match status" value="1"/>
</dbReference>
<dbReference type="PANTHER" id="PTHR11252:SF0">
    <property type="entry name" value="POLYRIBONUCLEOTIDE NUCLEOTIDYLTRANSFERASE 1, MITOCHONDRIAL"/>
    <property type="match status" value="1"/>
</dbReference>
<dbReference type="Pfam" id="PF00013">
    <property type="entry name" value="KH_1"/>
    <property type="match status" value="1"/>
</dbReference>
<dbReference type="Pfam" id="PF03726">
    <property type="entry name" value="PNPase"/>
    <property type="match status" value="1"/>
</dbReference>
<dbReference type="Pfam" id="PF01138">
    <property type="entry name" value="RNase_PH"/>
    <property type="match status" value="2"/>
</dbReference>
<dbReference type="Pfam" id="PF03725">
    <property type="entry name" value="RNase_PH_C"/>
    <property type="match status" value="2"/>
</dbReference>
<dbReference type="Pfam" id="PF00575">
    <property type="entry name" value="S1"/>
    <property type="match status" value="1"/>
</dbReference>
<dbReference type="PIRSF" id="PIRSF005499">
    <property type="entry name" value="PNPase"/>
    <property type="match status" value="1"/>
</dbReference>
<dbReference type="SMART" id="SM00322">
    <property type="entry name" value="KH"/>
    <property type="match status" value="1"/>
</dbReference>
<dbReference type="SMART" id="SM00316">
    <property type="entry name" value="S1"/>
    <property type="match status" value="1"/>
</dbReference>
<dbReference type="SUPFAM" id="SSF54791">
    <property type="entry name" value="Eukaryotic type KH-domain (KH-domain type I)"/>
    <property type="match status" value="1"/>
</dbReference>
<dbReference type="SUPFAM" id="SSF50249">
    <property type="entry name" value="Nucleic acid-binding proteins"/>
    <property type="match status" value="1"/>
</dbReference>
<dbReference type="SUPFAM" id="SSF46915">
    <property type="entry name" value="Polynucleotide phosphorylase/guanosine pentaphosphate synthase (PNPase/GPSI), domain 3"/>
    <property type="match status" value="1"/>
</dbReference>
<dbReference type="SUPFAM" id="SSF55666">
    <property type="entry name" value="Ribonuclease PH domain 2-like"/>
    <property type="match status" value="2"/>
</dbReference>
<dbReference type="SUPFAM" id="SSF54211">
    <property type="entry name" value="Ribosomal protein S5 domain 2-like"/>
    <property type="match status" value="2"/>
</dbReference>
<dbReference type="PROSITE" id="PS50084">
    <property type="entry name" value="KH_TYPE_1"/>
    <property type="match status" value="1"/>
</dbReference>
<dbReference type="PROSITE" id="PS50126">
    <property type="entry name" value="S1"/>
    <property type="match status" value="1"/>
</dbReference>
<evidence type="ECO:0000255" key="1">
    <source>
        <dbReference type="HAMAP-Rule" id="MF_01595"/>
    </source>
</evidence>
<name>PNP_THEVB</name>
<protein>
    <recommendedName>
        <fullName evidence="1">Polyribonucleotide nucleotidyltransferase</fullName>
        <ecNumber evidence="1">2.7.7.8</ecNumber>
    </recommendedName>
    <alternativeName>
        <fullName evidence="1">Polynucleotide phosphorylase</fullName>
        <shortName evidence="1">PNPase</shortName>
    </alternativeName>
</protein>
<proteinExistence type="inferred from homology"/>